<gene>
    <name evidence="1" type="primary">norW</name>
    <name evidence="1" type="synonym">flrR</name>
    <name type="ordered locus">SeAg_B2961</name>
</gene>
<comment type="function">
    <text evidence="1">One of at least two accessory proteins for anaerobic nitric oxide (NO) reductase. Reduces the rubredoxin moiety of NO reductase.</text>
</comment>
<comment type="catalytic activity">
    <reaction evidence="1">
        <text>2 reduced [nitric oxide reductase rubredoxin domain] + NAD(+) + H(+) = 2 oxidized [nitric oxide reductase rubredoxin domain] + NADH</text>
        <dbReference type="Rhea" id="RHEA:42960"/>
        <dbReference type="Rhea" id="RHEA-COMP:10304"/>
        <dbReference type="Rhea" id="RHEA-COMP:10305"/>
        <dbReference type="ChEBI" id="CHEBI:15378"/>
        <dbReference type="ChEBI" id="CHEBI:29033"/>
        <dbReference type="ChEBI" id="CHEBI:29034"/>
        <dbReference type="ChEBI" id="CHEBI:57540"/>
        <dbReference type="ChEBI" id="CHEBI:57945"/>
    </reaction>
</comment>
<comment type="cofactor">
    <cofactor evidence="1">
        <name>FAD</name>
        <dbReference type="ChEBI" id="CHEBI:57692"/>
    </cofactor>
</comment>
<comment type="pathway">
    <text evidence="1">Nitrogen metabolism; nitric oxide reduction.</text>
</comment>
<comment type="subcellular location">
    <subcellularLocation>
        <location evidence="1">Cytoplasm</location>
    </subcellularLocation>
</comment>
<comment type="similarity">
    <text evidence="1">Belongs to the FAD-dependent oxidoreductase family.</text>
</comment>
<name>NORW_SALA4</name>
<sequence>MSRGIIIIGSGFAARQLVKNIRKQDAHVPLTLIAADSMDEYNKPDLSHVISQSQRADDLTRQLAGEFAEQFNLRLFPHIRVADIDADAHVVKSQDKQWQYDKLVLATGATAFVPPIAGRELMLTLNSQQEYRACETQLRDAQRVLIVGGGLIGSELAMDFCRAGKTVTLMDNAASLLASLMPPEVSSRLQHHLTDMGVHLLLKSQLQKLEKIEAGIRATLASQRSIEVDAVIAATGLRPETALARRAGVAVNRGVCVDSYLQTSHPDIYAIGDCAEINGQVLPFLQPIQLSAMYLAKNLFGGNAPLKLPAMLVKVKTPELPLHLAGETQRRDLSWQITAESDGMIAKGMSGEGQLRAFVVSEDRMKEAFALLKTLSV</sequence>
<organism>
    <name type="scientific">Salmonella agona (strain SL483)</name>
    <dbReference type="NCBI Taxonomy" id="454166"/>
    <lineage>
        <taxon>Bacteria</taxon>
        <taxon>Pseudomonadati</taxon>
        <taxon>Pseudomonadota</taxon>
        <taxon>Gammaproteobacteria</taxon>
        <taxon>Enterobacterales</taxon>
        <taxon>Enterobacteriaceae</taxon>
        <taxon>Salmonella</taxon>
    </lineage>
</organism>
<feature type="chain" id="PRO_1000141176" description="Nitric oxide reductase FlRd-NAD(+) reductase">
    <location>
        <begin position="1"/>
        <end position="377"/>
    </location>
</feature>
<dbReference type="EC" id="1.18.1.-" evidence="1"/>
<dbReference type="EMBL" id="CP001138">
    <property type="protein sequence ID" value="ACH49946.1"/>
    <property type="molecule type" value="Genomic_DNA"/>
</dbReference>
<dbReference type="RefSeq" id="WP_000086326.1">
    <property type="nucleotide sequence ID" value="NC_011149.1"/>
</dbReference>
<dbReference type="SMR" id="B5F365"/>
<dbReference type="KEGG" id="sea:SeAg_B2961"/>
<dbReference type="HOGENOM" id="CLU_003291_4_4_6"/>
<dbReference type="UniPathway" id="UPA00638"/>
<dbReference type="Proteomes" id="UP000008819">
    <property type="component" value="Chromosome"/>
</dbReference>
<dbReference type="GO" id="GO:0005737">
    <property type="term" value="C:cytoplasm"/>
    <property type="evidence" value="ECO:0007669"/>
    <property type="project" value="UniProtKB-SubCell"/>
</dbReference>
<dbReference type="GO" id="GO:0016731">
    <property type="term" value="F:oxidoreductase activity, acting on iron-sulfur proteins as donors, NAD or NADP as acceptor"/>
    <property type="evidence" value="ECO:0007669"/>
    <property type="project" value="UniProtKB-UniRule"/>
</dbReference>
<dbReference type="Gene3D" id="3.30.390.120">
    <property type="match status" value="1"/>
</dbReference>
<dbReference type="Gene3D" id="3.50.50.60">
    <property type="entry name" value="FAD/NAD(P)-binding domain"/>
    <property type="match status" value="2"/>
</dbReference>
<dbReference type="HAMAP" id="MF_01313">
    <property type="entry name" value="NorW"/>
    <property type="match status" value="1"/>
</dbReference>
<dbReference type="InterPro" id="IPR050260">
    <property type="entry name" value="FAD-bd_OxRdtase"/>
</dbReference>
<dbReference type="InterPro" id="IPR036188">
    <property type="entry name" value="FAD/NAD-bd_sf"/>
</dbReference>
<dbReference type="InterPro" id="IPR023753">
    <property type="entry name" value="FAD/NAD-binding_dom"/>
</dbReference>
<dbReference type="InterPro" id="IPR023961">
    <property type="entry name" value="NO_rdtase_NorW"/>
</dbReference>
<dbReference type="InterPro" id="IPR041364">
    <property type="entry name" value="Rbx-bd"/>
</dbReference>
<dbReference type="NCBIfam" id="NF003437">
    <property type="entry name" value="PRK04965.1"/>
    <property type="match status" value="1"/>
</dbReference>
<dbReference type="PANTHER" id="PTHR43429:SF3">
    <property type="entry name" value="NITRITE REDUCTASE [NAD(P)H]"/>
    <property type="match status" value="1"/>
</dbReference>
<dbReference type="PANTHER" id="PTHR43429">
    <property type="entry name" value="PYRIDINE NUCLEOTIDE-DISULFIDE OXIDOREDUCTASE DOMAIN-CONTAINING"/>
    <property type="match status" value="1"/>
</dbReference>
<dbReference type="Pfam" id="PF07992">
    <property type="entry name" value="Pyr_redox_2"/>
    <property type="match status" value="1"/>
</dbReference>
<dbReference type="Pfam" id="PF18113">
    <property type="entry name" value="Rbx_binding"/>
    <property type="match status" value="1"/>
</dbReference>
<dbReference type="PRINTS" id="PR00368">
    <property type="entry name" value="FADPNR"/>
</dbReference>
<dbReference type="PRINTS" id="PR00411">
    <property type="entry name" value="PNDRDTASEI"/>
</dbReference>
<dbReference type="SUPFAM" id="SSF51905">
    <property type="entry name" value="FAD/NAD(P)-binding domain"/>
    <property type="match status" value="1"/>
</dbReference>
<protein>
    <recommendedName>
        <fullName evidence="1">Nitric oxide reductase FlRd-NAD(+) reductase</fullName>
        <ecNumber evidence="1">1.18.1.-</ecNumber>
    </recommendedName>
    <alternativeName>
        <fullName evidence="1">Flavorubredoxin reductase</fullName>
        <shortName evidence="1">FlRd-reductase</shortName>
        <shortName evidence="1">FlavoRb reductase</shortName>
    </alternativeName>
</protein>
<evidence type="ECO:0000255" key="1">
    <source>
        <dbReference type="HAMAP-Rule" id="MF_01313"/>
    </source>
</evidence>
<accession>B5F365</accession>
<reference key="1">
    <citation type="journal article" date="2011" name="J. Bacteriol.">
        <title>Comparative genomics of 28 Salmonella enterica isolates: evidence for CRISPR-mediated adaptive sublineage evolution.</title>
        <authorList>
            <person name="Fricke W.F."/>
            <person name="Mammel M.K."/>
            <person name="McDermott P.F."/>
            <person name="Tartera C."/>
            <person name="White D.G."/>
            <person name="Leclerc J.E."/>
            <person name="Ravel J."/>
            <person name="Cebula T.A."/>
        </authorList>
    </citation>
    <scope>NUCLEOTIDE SEQUENCE [LARGE SCALE GENOMIC DNA]</scope>
    <source>
        <strain>SL483</strain>
    </source>
</reference>
<proteinExistence type="inferred from homology"/>
<keyword id="KW-0963">Cytoplasm</keyword>
<keyword id="KW-0274">FAD</keyword>
<keyword id="KW-0285">Flavoprotein</keyword>
<keyword id="KW-0520">NAD</keyword>
<keyword id="KW-0560">Oxidoreductase</keyword>